<reference key="1">
    <citation type="journal article" date="2011" name="PLoS ONE">
        <title>The genome of Akkermansia muciniphila, a dedicated intestinal mucin degrader, and its use in exploring intestinal metagenomes.</title>
        <authorList>
            <person name="van Passel M.W."/>
            <person name="Kant R."/>
            <person name="Zoetendal E.G."/>
            <person name="Plugge C.M."/>
            <person name="Derrien M."/>
            <person name="Malfatti S.A."/>
            <person name="Chain P.S."/>
            <person name="Woyke T."/>
            <person name="Palva A."/>
            <person name="de Vos W.M."/>
            <person name="Smidt H."/>
        </authorList>
    </citation>
    <scope>NUCLEOTIDE SEQUENCE [LARGE SCALE GENOMIC DNA]</scope>
    <source>
        <strain>ATCC BAA-835 / DSM 22959 / JCM 33894 / BCRC 81048 / CCUG 64013 / CIP 107961 / Muc</strain>
    </source>
</reference>
<dbReference type="EC" id="6.1.1.15" evidence="1"/>
<dbReference type="EMBL" id="CP001071">
    <property type="protein sequence ID" value="ACD03881.1"/>
    <property type="molecule type" value="Genomic_DNA"/>
</dbReference>
<dbReference type="RefSeq" id="WP_012419096.1">
    <property type="nucleotide sequence ID" value="NZ_CP071807.1"/>
</dbReference>
<dbReference type="SMR" id="B2UL92"/>
<dbReference type="STRING" id="349741.Amuc_0034"/>
<dbReference type="PaxDb" id="349741-Amuc_0034"/>
<dbReference type="KEGG" id="amu:Amuc_0034"/>
<dbReference type="eggNOG" id="COG0442">
    <property type="taxonomic scope" value="Bacteria"/>
</dbReference>
<dbReference type="HOGENOM" id="CLU_001882_4_2_0"/>
<dbReference type="OrthoDB" id="9809052at2"/>
<dbReference type="BioCyc" id="AMUC349741:G1GBX-37-MONOMER"/>
<dbReference type="Proteomes" id="UP000001031">
    <property type="component" value="Chromosome"/>
</dbReference>
<dbReference type="GO" id="GO:0017101">
    <property type="term" value="C:aminoacyl-tRNA synthetase multienzyme complex"/>
    <property type="evidence" value="ECO:0007669"/>
    <property type="project" value="TreeGrafter"/>
</dbReference>
<dbReference type="GO" id="GO:0005737">
    <property type="term" value="C:cytoplasm"/>
    <property type="evidence" value="ECO:0007669"/>
    <property type="project" value="UniProtKB-SubCell"/>
</dbReference>
<dbReference type="GO" id="GO:0005524">
    <property type="term" value="F:ATP binding"/>
    <property type="evidence" value="ECO:0007669"/>
    <property type="project" value="UniProtKB-UniRule"/>
</dbReference>
<dbReference type="GO" id="GO:0004827">
    <property type="term" value="F:proline-tRNA ligase activity"/>
    <property type="evidence" value="ECO:0007669"/>
    <property type="project" value="UniProtKB-UniRule"/>
</dbReference>
<dbReference type="GO" id="GO:0006433">
    <property type="term" value="P:prolyl-tRNA aminoacylation"/>
    <property type="evidence" value="ECO:0007669"/>
    <property type="project" value="UniProtKB-UniRule"/>
</dbReference>
<dbReference type="CDD" id="cd00778">
    <property type="entry name" value="ProRS_core_arch_euk"/>
    <property type="match status" value="1"/>
</dbReference>
<dbReference type="FunFam" id="3.30.930.10:FF:000037">
    <property type="entry name" value="Proline--tRNA ligase"/>
    <property type="match status" value="1"/>
</dbReference>
<dbReference type="Gene3D" id="3.40.50.800">
    <property type="entry name" value="Anticodon-binding domain"/>
    <property type="match status" value="1"/>
</dbReference>
<dbReference type="Gene3D" id="3.30.930.10">
    <property type="entry name" value="Bira Bifunctional Protein, Domain 2"/>
    <property type="match status" value="1"/>
</dbReference>
<dbReference type="Gene3D" id="3.30.110.30">
    <property type="entry name" value="C-terminal domain of ProRS"/>
    <property type="match status" value="1"/>
</dbReference>
<dbReference type="HAMAP" id="MF_01571">
    <property type="entry name" value="Pro_tRNA_synth_type3"/>
    <property type="match status" value="1"/>
</dbReference>
<dbReference type="InterPro" id="IPR002314">
    <property type="entry name" value="aa-tRNA-synt_IIb"/>
</dbReference>
<dbReference type="InterPro" id="IPR006195">
    <property type="entry name" value="aa-tRNA-synth_II"/>
</dbReference>
<dbReference type="InterPro" id="IPR045864">
    <property type="entry name" value="aa-tRNA-synth_II/BPL/LPL"/>
</dbReference>
<dbReference type="InterPro" id="IPR004154">
    <property type="entry name" value="Anticodon-bd"/>
</dbReference>
<dbReference type="InterPro" id="IPR036621">
    <property type="entry name" value="Anticodon-bd_dom_sf"/>
</dbReference>
<dbReference type="InterPro" id="IPR004499">
    <property type="entry name" value="Pro-tRNA-ligase_IIa_arc-type"/>
</dbReference>
<dbReference type="InterPro" id="IPR016061">
    <property type="entry name" value="Pro-tRNA_ligase_II_C"/>
</dbReference>
<dbReference type="InterPro" id="IPR017449">
    <property type="entry name" value="Pro-tRNA_synth_II"/>
</dbReference>
<dbReference type="InterPro" id="IPR033721">
    <property type="entry name" value="ProRS_core_arch_euk"/>
</dbReference>
<dbReference type="NCBIfam" id="TIGR00408">
    <property type="entry name" value="proS_fam_I"/>
    <property type="match status" value="1"/>
</dbReference>
<dbReference type="PANTHER" id="PTHR43382:SF2">
    <property type="entry name" value="BIFUNCTIONAL GLUTAMATE_PROLINE--TRNA LIGASE"/>
    <property type="match status" value="1"/>
</dbReference>
<dbReference type="PANTHER" id="PTHR43382">
    <property type="entry name" value="PROLYL-TRNA SYNTHETASE"/>
    <property type="match status" value="1"/>
</dbReference>
<dbReference type="Pfam" id="PF03129">
    <property type="entry name" value="HGTP_anticodon"/>
    <property type="match status" value="1"/>
</dbReference>
<dbReference type="Pfam" id="PF09180">
    <property type="entry name" value="ProRS-C_1"/>
    <property type="match status" value="1"/>
</dbReference>
<dbReference type="Pfam" id="PF00587">
    <property type="entry name" value="tRNA-synt_2b"/>
    <property type="match status" value="1"/>
</dbReference>
<dbReference type="SMART" id="SM00946">
    <property type="entry name" value="ProRS-C_1"/>
    <property type="match status" value="1"/>
</dbReference>
<dbReference type="SUPFAM" id="SSF64586">
    <property type="entry name" value="C-terminal domain of ProRS"/>
    <property type="match status" value="1"/>
</dbReference>
<dbReference type="SUPFAM" id="SSF52954">
    <property type="entry name" value="Class II aaRS ABD-related"/>
    <property type="match status" value="1"/>
</dbReference>
<dbReference type="SUPFAM" id="SSF55681">
    <property type="entry name" value="Class II aaRS and biotin synthetases"/>
    <property type="match status" value="1"/>
</dbReference>
<dbReference type="PROSITE" id="PS50862">
    <property type="entry name" value="AA_TRNA_LIGASE_II"/>
    <property type="match status" value="1"/>
</dbReference>
<gene>
    <name evidence="1" type="primary">proS</name>
    <name type="ordered locus">Amuc_0034</name>
</gene>
<keyword id="KW-0030">Aminoacyl-tRNA synthetase</keyword>
<keyword id="KW-0067">ATP-binding</keyword>
<keyword id="KW-0963">Cytoplasm</keyword>
<keyword id="KW-0436">Ligase</keyword>
<keyword id="KW-0547">Nucleotide-binding</keyword>
<keyword id="KW-0648">Protein biosynthesis</keyword>
<keyword id="KW-1185">Reference proteome</keyword>
<organism>
    <name type="scientific">Akkermansia muciniphila (strain ATCC BAA-835 / DSM 22959 / JCM 33894 / BCRC 81048 / CCUG 64013 / CIP 107961 / Muc)</name>
    <dbReference type="NCBI Taxonomy" id="349741"/>
    <lineage>
        <taxon>Bacteria</taxon>
        <taxon>Pseudomonadati</taxon>
        <taxon>Verrucomicrobiota</taxon>
        <taxon>Verrucomicrobiia</taxon>
        <taxon>Verrucomicrobiales</taxon>
        <taxon>Akkermansiaceae</taxon>
        <taxon>Akkermansia</taxon>
    </lineage>
</organism>
<comment type="function">
    <text evidence="1">Catalyzes the attachment of proline to tRNA(Pro) in a two-step reaction: proline is first activated by ATP to form Pro-AMP and then transferred to the acceptor end of tRNA(Pro).</text>
</comment>
<comment type="catalytic activity">
    <reaction evidence="1">
        <text>tRNA(Pro) + L-proline + ATP = L-prolyl-tRNA(Pro) + AMP + diphosphate</text>
        <dbReference type="Rhea" id="RHEA:14305"/>
        <dbReference type="Rhea" id="RHEA-COMP:9700"/>
        <dbReference type="Rhea" id="RHEA-COMP:9702"/>
        <dbReference type="ChEBI" id="CHEBI:30616"/>
        <dbReference type="ChEBI" id="CHEBI:33019"/>
        <dbReference type="ChEBI" id="CHEBI:60039"/>
        <dbReference type="ChEBI" id="CHEBI:78442"/>
        <dbReference type="ChEBI" id="CHEBI:78532"/>
        <dbReference type="ChEBI" id="CHEBI:456215"/>
        <dbReference type="EC" id="6.1.1.15"/>
    </reaction>
</comment>
<comment type="subunit">
    <text evidence="1">Homodimer.</text>
</comment>
<comment type="subcellular location">
    <subcellularLocation>
        <location evidence="1">Cytoplasm</location>
    </subcellularLocation>
</comment>
<comment type="domain">
    <text evidence="1">Consists of three domains: the N-terminal catalytic domain, the anticodon-binding domain and the C-terminal extension.</text>
</comment>
<comment type="similarity">
    <text evidence="1">Belongs to the class-II aminoacyl-tRNA synthetase family. ProS type 3 subfamily.</text>
</comment>
<protein>
    <recommendedName>
        <fullName evidence="1">Proline--tRNA ligase</fullName>
        <ecNumber evidence="1">6.1.1.15</ecNumber>
    </recommendedName>
    <alternativeName>
        <fullName evidence="1">Prolyl-tRNA synthetase</fullName>
        <shortName evidence="1">ProRS</shortName>
    </alternativeName>
</protein>
<accession>B2UL92</accession>
<name>SYP_AKKM8</name>
<sequence>MSQQTAITPTRAQDFPEWYQQVIKAADMAENSEVRGCMVIKPWGYAIWELIQKDLDQRFKDTGHTNAYFPLLIPISYLEKEAEHAEGFATECAVVTHHRLEAQKDEATGKTRMIPTGELTEPFVIRPTSETVIGAAFARWTSSYRDLPLKVNQWCNVMRWEMRPRIFLRTAEFLWQEGHTAHETREEAIEETLTMHKVYEEFQRDVLAIPTIPGEKTEAERFPGAEQTYTVEAMVQDRKAIQAGTSHFLGQNFSKSQNICFAGRDNTQQFAWTSSWGVSTRMIGALIMMHSDDDGLVCPPRVAPQQIVIIPVTPKEESRQAVLDHCEELARTLRAKTFHGQPLRVLVDRRDLGGGAKKWEWVKKGVPVRLEIGPRDLEKGSVCLQRRDRPANEKSFVPETELIDTAADILQSIQDTLLQRAIAFRDSHIRPASTLRELEENFSGEGDADWLQVPWDGSPEEEEELAKRLRISIRCIPLGELGRGEPAPCILTGRMTKRRVLWARSY</sequence>
<feature type="chain" id="PRO_1000215543" description="Proline--tRNA ligase">
    <location>
        <begin position="1"/>
        <end position="506"/>
    </location>
</feature>
<evidence type="ECO:0000255" key="1">
    <source>
        <dbReference type="HAMAP-Rule" id="MF_01571"/>
    </source>
</evidence>
<proteinExistence type="inferred from homology"/>